<proteinExistence type="inferred from homology"/>
<sequence length="386" mass="42179">MISHLFQTYGRRTVEFVKGNGTKVIDNNGKQYLDFTSGIGVCNLGHCHPTVMKAVQEQLNDIWHISNLFTNSLQEEVASLLTENIALDYVFFCNSGAEANEAALKLARKHTGKSLVVTCEQSFHGRTFGTMSATGQNKVKEGFGPLLPSFLHTPFNDIKALKEVMNEEVAAVMVEVVQGEGGVIPADLSFLKEIETLCKKFGSLFIIDEVQTGIGRTGTLFAYEQMGIDPHIVTTAKALGNGIPVGAMIGRKELGTSFTAGSHGSTFGGNYVAMAAAKEVLQVSKRLSFLKEVQEKGEYVLQKLQEELQHVECIQNIRGKGLMVGIECTHEVASFIEQLEKEGLLVLQAGPNVIRLLPPLIVTNEELEQAVYMIKKVVCTKNVSII</sequence>
<dbReference type="EC" id="2.6.1.11" evidence="1"/>
<dbReference type="EMBL" id="AE016879">
    <property type="protein sequence ID" value="AAP28070.1"/>
    <property type="molecule type" value="Genomic_DNA"/>
</dbReference>
<dbReference type="EMBL" id="AE017334">
    <property type="protein sequence ID" value="AAT35422.1"/>
    <property type="molecule type" value="Genomic_DNA"/>
</dbReference>
<dbReference type="EMBL" id="AE017225">
    <property type="protein sequence ID" value="AAT56338.1"/>
    <property type="status" value="ALT_INIT"/>
    <property type="molecule type" value="Genomic_DNA"/>
</dbReference>
<dbReference type="RefSeq" id="NP_846584.1">
    <property type="nucleotide sequence ID" value="NC_003997.3"/>
</dbReference>
<dbReference type="RefSeq" id="WP_000623333.1">
    <property type="nucleotide sequence ID" value="NZ_WXXJ01000027.1"/>
</dbReference>
<dbReference type="SMR" id="Q81M98"/>
<dbReference type="IntAct" id="Q81M98">
    <property type="interactions" value="1"/>
</dbReference>
<dbReference type="STRING" id="261594.GBAA_4352"/>
<dbReference type="DNASU" id="1087573"/>
<dbReference type="GeneID" id="45024017"/>
<dbReference type="KEGG" id="ban:BA_4352"/>
<dbReference type="KEGG" id="bar:GBAA_4352"/>
<dbReference type="KEGG" id="bat:BAS4037"/>
<dbReference type="PATRIC" id="fig|198094.11.peg.4320"/>
<dbReference type="eggNOG" id="COG4992">
    <property type="taxonomic scope" value="Bacteria"/>
</dbReference>
<dbReference type="HOGENOM" id="CLU_016922_10_1_9"/>
<dbReference type="OMA" id="MVPGFKY"/>
<dbReference type="OrthoDB" id="9807885at2"/>
<dbReference type="UniPathway" id="UPA00068">
    <property type="reaction ID" value="UER00109"/>
</dbReference>
<dbReference type="Proteomes" id="UP000000427">
    <property type="component" value="Chromosome"/>
</dbReference>
<dbReference type="Proteomes" id="UP000000594">
    <property type="component" value="Chromosome"/>
</dbReference>
<dbReference type="GO" id="GO:0005737">
    <property type="term" value="C:cytoplasm"/>
    <property type="evidence" value="ECO:0007669"/>
    <property type="project" value="UniProtKB-SubCell"/>
</dbReference>
<dbReference type="GO" id="GO:0042802">
    <property type="term" value="F:identical protein binding"/>
    <property type="evidence" value="ECO:0007669"/>
    <property type="project" value="TreeGrafter"/>
</dbReference>
<dbReference type="GO" id="GO:0003992">
    <property type="term" value="F:N2-acetyl-L-ornithine:2-oxoglutarate 5-aminotransferase activity"/>
    <property type="evidence" value="ECO:0007669"/>
    <property type="project" value="UniProtKB-UniRule"/>
</dbReference>
<dbReference type="GO" id="GO:0030170">
    <property type="term" value="F:pyridoxal phosphate binding"/>
    <property type="evidence" value="ECO:0007669"/>
    <property type="project" value="InterPro"/>
</dbReference>
<dbReference type="GO" id="GO:0006526">
    <property type="term" value="P:L-arginine biosynthetic process"/>
    <property type="evidence" value="ECO:0007669"/>
    <property type="project" value="UniProtKB-UniRule"/>
</dbReference>
<dbReference type="CDD" id="cd00610">
    <property type="entry name" value="OAT_like"/>
    <property type="match status" value="1"/>
</dbReference>
<dbReference type="FunFam" id="3.40.640.10:FF:000004">
    <property type="entry name" value="Acetylornithine aminotransferase"/>
    <property type="match status" value="1"/>
</dbReference>
<dbReference type="Gene3D" id="3.90.1150.10">
    <property type="entry name" value="Aspartate Aminotransferase, domain 1"/>
    <property type="match status" value="1"/>
</dbReference>
<dbReference type="Gene3D" id="3.40.640.10">
    <property type="entry name" value="Type I PLP-dependent aspartate aminotransferase-like (Major domain)"/>
    <property type="match status" value="1"/>
</dbReference>
<dbReference type="HAMAP" id="MF_01107">
    <property type="entry name" value="ArgD_aminotrans_3"/>
    <property type="match status" value="1"/>
</dbReference>
<dbReference type="InterPro" id="IPR004636">
    <property type="entry name" value="AcOrn/SuccOrn_fam"/>
</dbReference>
<dbReference type="InterPro" id="IPR005814">
    <property type="entry name" value="Aminotrans_3"/>
</dbReference>
<dbReference type="InterPro" id="IPR049704">
    <property type="entry name" value="Aminotrans_3_PPA_site"/>
</dbReference>
<dbReference type="InterPro" id="IPR050103">
    <property type="entry name" value="Class-III_PLP-dep_AT"/>
</dbReference>
<dbReference type="InterPro" id="IPR015424">
    <property type="entry name" value="PyrdxlP-dep_Trfase"/>
</dbReference>
<dbReference type="InterPro" id="IPR015421">
    <property type="entry name" value="PyrdxlP-dep_Trfase_major"/>
</dbReference>
<dbReference type="InterPro" id="IPR015422">
    <property type="entry name" value="PyrdxlP-dep_Trfase_small"/>
</dbReference>
<dbReference type="NCBIfam" id="TIGR00707">
    <property type="entry name" value="argD"/>
    <property type="match status" value="1"/>
</dbReference>
<dbReference type="NCBIfam" id="NF002325">
    <property type="entry name" value="PRK01278.1"/>
    <property type="match status" value="1"/>
</dbReference>
<dbReference type="NCBIfam" id="NF002797">
    <property type="entry name" value="PRK02936.1"/>
    <property type="match status" value="1"/>
</dbReference>
<dbReference type="PANTHER" id="PTHR11986:SF79">
    <property type="entry name" value="ACETYLORNITHINE AMINOTRANSFERASE, MITOCHONDRIAL"/>
    <property type="match status" value="1"/>
</dbReference>
<dbReference type="PANTHER" id="PTHR11986">
    <property type="entry name" value="AMINOTRANSFERASE CLASS III"/>
    <property type="match status" value="1"/>
</dbReference>
<dbReference type="Pfam" id="PF00202">
    <property type="entry name" value="Aminotran_3"/>
    <property type="match status" value="1"/>
</dbReference>
<dbReference type="PIRSF" id="PIRSF000521">
    <property type="entry name" value="Transaminase_4ab_Lys_Orn"/>
    <property type="match status" value="1"/>
</dbReference>
<dbReference type="SUPFAM" id="SSF53383">
    <property type="entry name" value="PLP-dependent transferases"/>
    <property type="match status" value="1"/>
</dbReference>
<dbReference type="PROSITE" id="PS00600">
    <property type="entry name" value="AA_TRANSFER_CLASS_3"/>
    <property type="match status" value="1"/>
</dbReference>
<protein>
    <recommendedName>
        <fullName evidence="1">Acetylornithine aminotransferase</fullName>
        <shortName evidence="1">ACOAT</shortName>
        <ecNumber evidence="1">2.6.1.11</ecNumber>
    </recommendedName>
</protein>
<evidence type="ECO:0000255" key="1">
    <source>
        <dbReference type="HAMAP-Rule" id="MF_01107"/>
    </source>
</evidence>
<evidence type="ECO:0000305" key="2"/>
<accession>Q81M98</accession>
<accession>Q6HTQ1</accession>
<accession>Q6KIZ6</accession>
<reference key="1">
    <citation type="journal article" date="2003" name="Nature">
        <title>The genome sequence of Bacillus anthracis Ames and comparison to closely related bacteria.</title>
        <authorList>
            <person name="Read T.D."/>
            <person name="Peterson S.N."/>
            <person name="Tourasse N.J."/>
            <person name="Baillie L.W."/>
            <person name="Paulsen I.T."/>
            <person name="Nelson K.E."/>
            <person name="Tettelin H."/>
            <person name="Fouts D.E."/>
            <person name="Eisen J.A."/>
            <person name="Gill S.R."/>
            <person name="Holtzapple E.K."/>
            <person name="Okstad O.A."/>
            <person name="Helgason E."/>
            <person name="Rilstone J."/>
            <person name="Wu M."/>
            <person name="Kolonay J.F."/>
            <person name="Beanan M.J."/>
            <person name="Dodson R.J."/>
            <person name="Brinkac L.M."/>
            <person name="Gwinn M.L."/>
            <person name="DeBoy R.T."/>
            <person name="Madpu R."/>
            <person name="Daugherty S.C."/>
            <person name="Durkin A.S."/>
            <person name="Haft D.H."/>
            <person name="Nelson W.C."/>
            <person name="Peterson J.D."/>
            <person name="Pop M."/>
            <person name="Khouri H.M."/>
            <person name="Radune D."/>
            <person name="Benton J.L."/>
            <person name="Mahamoud Y."/>
            <person name="Jiang L."/>
            <person name="Hance I.R."/>
            <person name="Weidman J.F."/>
            <person name="Berry K.J."/>
            <person name="Plaut R.D."/>
            <person name="Wolf A.M."/>
            <person name="Watkins K.L."/>
            <person name="Nierman W.C."/>
            <person name="Hazen A."/>
            <person name="Cline R.T."/>
            <person name="Redmond C."/>
            <person name="Thwaite J.E."/>
            <person name="White O."/>
            <person name="Salzberg S.L."/>
            <person name="Thomason B."/>
            <person name="Friedlander A.M."/>
            <person name="Koehler T.M."/>
            <person name="Hanna P.C."/>
            <person name="Kolstoe A.-B."/>
            <person name="Fraser C.M."/>
        </authorList>
    </citation>
    <scope>NUCLEOTIDE SEQUENCE [LARGE SCALE GENOMIC DNA]</scope>
    <source>
        <strain>Ames / isolate Porton</strain>
    </source>
</reference>
<reference key="2">
    <citation type="journal article" date="2009" name="J. Bacteriol.">
        <title>The complete genome sequence of Bacillus anthracis Ames 'Ancestor'.</title>
        <authorList>
            <person name="Ravel J."/>
            <person name="Jiang L."/>
            <person name="Stanley S.T."/>
            <person name="Wilson M.R."/>
            <person name="Decker R.S."/>
            <person name="Read T.D."/>
            <person name="Worsham P."/>
            <person name="Keim P.S."/>
            <person name="Salzberg S.L."/>
            <person name="Fraser-Liggett C.M."/>
            <person name="Rasko D.A."/>
        </authorList>
    </citation>
    <scope>NUCLEOTIDE SEQUENCE [LARGE SCALE GENOMIC DNA]</scope>
    <source>
        <strain>Ames ancestor</strain>
    </source>
</reference>
<reference key="3">
    <citation type="submission" date="2004-01" db="EMBL/GenBank/DDBJ databases">
        <title>Complete genome sequence of Bacillus anthracis Sterne.</title>
        <authorList>
            <person name="Brettin T.S."/>
            <person name="Bruce D."/>
            <person name="Challacombe J.F."/>
            <person name="Gilna P."/>
            <person name="Han C."/>
            <person name="Hill K."/>
            <person name="Hitchcock P."/>
            <person name="Jackson P."/>
            <person name="Keim P."/>
            <person name="Longmire J."/>
            <person name="Lucas S."/>
            <person name="Okinaka R."/>
            <person name="Richardson P."/>
            <person name="Rubin E."/>
            <person name="Tice H."/>
        </authorList>
    </citation>
    <scope>NUCLEOTIDE SEQUENCE [LARGE SCALE GENOMIC DNA]</scope>
    <source>
        <strain>Sterne</strain>
    </source>
</reference>
<feature type="chain" id="PRO_0000112716" description="Acetylornithine aminotransferase">
    <location>
        <begin position="1"/>
        <end position="386"/>
    </location>
</feature>
<feature type="binding site" evidence="1">
    <location>
        <begin position="96"/>
        <end position="97"/>
    </location>
    <ligand>
        <name>pyridoxal 5'-phosphate</name>
        <dbReference type="ChEBI" id="CHEBI:597326"/>
    </ligand>
</feature>
<feature type="binding site" evidence="1">
    <location>
        <position position="123"/>
    </location>
    <ligand>
        <name>pyridoxal 5'-phosphate</name>
        <dbReference type="ChEBI" id="CHEBI:597326"/>
    </ligand>
</feature>
<feature type="binding site" evidence="1">
    <location>
        <position position="126"/>
    </location>
    <ligand>
        <name>N(2)-acetyl-L-ornithine</name>
        <dbReference type="ChEBI" id="CHEBI:57805"/>
    </ligand>
</feature>
<feature type="binding site" evidence="1">
    <location>
        <begin position="208"/>
        <end position="211"/>
    </location>
    <ligand>
        <name>pyridoxal 5'-phosphate</name>
        <dbReference type="ChEBI" id="CHEBI:597326"/>
    </ligand>
</feature>
<feature type="binding site" evidence="1">
    <location>
        <position position="265"/>
    </location>
    <ligand>
        <name>N(2)-acetyl-L-ornithine</name>
        <dbReference type="ChEBI" id="CHEBI:57805"/>
    </ligand>
</feature>
<feature type="binding site" evidence="1">
    <location>
        <position position="266"/>
    </location>
    <ligand>
        <name>pyridoxal 5'-phosphate</name>
        <dbReference type="ChEBI" id="CHEBI:597326"/>
    </ligand>
</feature>
<feature type="modified residue" description="N6-(pyridoxal phosphate)lysine" evidence="1">
    <location>
        <position position="237"/>
    </location>
</feature>
<gene>
    <name evidence="1" type="primary">argD</name>
    <name type="ordered locus">BA_4352</name>
    <name type="ordered locus">GBAA_4352</name>
    <name type="ordered locus">BAS4037</name>
</gene>
<comment type="catalytic activity">
    <reaction evidence="1">
        <text>N(2)-acetyl-L-ornithine + 2-oxoglutarate = N-acetyl-L-glutamate 5-semialdehyde + L-glutamate</text>
        <dbReference type="Rhea" id="RHEA:18049"/>
        <dbReference type="ChEBI" id="CHEBI:16810"/>
        <dbReference type="ChEBI" id="CHEBI:29123"/>
        <dbReference type="ChEBI" id="CHEBI:29985"/>
        <dbReference type="ChEBI" id="CHEBI:57805"/>
        <dbReference type="EC" id="2.6.1.11"/>
    </reaction>
</comment>
<comment type="cofactor">
    <cofactor evidence="1">
        <name>pyridoxal 5'-phosphate</name>
        <dbReference type="ChEBI" id="CHEBI:597326"/>
    </cofactor>
    <text evidence="1">Binds 1 pyridoxal phosphate per subunit.</text>
</comment>
<comment type="pathway">
    <text evidence="1">Amino-acid biosynthesis; L-arginine biosynthesis; N(2)-acetyl-L-ornithine from L-glutamate: step 4/4.</text>
</comment>
<comment type="subunit">
    <text evidence="1">Homodimer.</text>
</comment>
<comment type="subcellular location">
    <subcellularLocation>
        <location evidence="1">Cytoplasm</location>
    </subcellularLocation>
</comment>
<comment type="miscellaneous">
    <text evidence="1">May also have succinyldiaminopimelate aminotransferase activity, thus carrying out the corresponding step in lysine biosynthesis.</text>
</comment>
<comment type="similarity">
    <text evidence="1">Belongs to the class-III pyridoxal-phosphate-dependent aminotransferase family. ArgD subfamily.</text>
</comment>
<comment type="sequence caution" evidence="2">
    <conflict type="erroneous initiation">
        <sequence resource="EMBL-CDS" id="AAT56338"/>
    </conflict>
</comment>
<name>ARGD_BACAN</name>
<organism>
    <name type="scientific">Bacillus anthracis</name>
    <dbReference type="NCBI Taxonomy" id="1392"/>
    <lineage>
        <taxon>Bacteria</taxon>
        <taxon>Bacillati</taxon>
        <taxon>Bacillota</taxon>
        <taxon>Bacilli</taxon>
        <taxon>Bacillales</taxon>
        <taxon>Bacillaceae</taxon>
        <taxon>Bacillus</taxon>
        <taxon>Bacillus cereus group</taxon>
    </lineage>
</organism>
<keyword id="KW-0028">Amino-acid biosynthesis</keyword>
<keyword id="KW-0032">Aminotransferase</keyword>
<keyword id="KW-0055">Arginine biosynthesis</keyword>
<keyword id="KW-0963">Cytoplasm</keyword>
<keyword id="KW-0663">Pyridoxal phosphate</keyword>
<keyword id="KW-1185">Reference proteome</keyword>
<keyword id="KW-0808">Transferase</keyword>